<sequence length="262" mass="27966">MSTLDTPLVVAGKTYHSRLMVGTGKYQDLEETQNAIQASGAEIVTIAIRRSNIGQNPGEPNLLDVISPHCYTLLPNTAGCYNAKEAVRTCRLARELLDGHSLVKLEVLGDEKTLFPDLVETYQAAEVLIKEDFQVMVYTNDDPIAAKRLEEMGCVAVMPLAAPIGSGLGIRNPYNILEIVQNATVPILVDAGVGTASDAAVAMELGCDGVLMNTAIAGAQNPILMASAMKKAVEAGRDAYLAGRIPRRRYASASSPLEGTFF</sequence>
<accession>Q3JAP1</accession>
<gene>
    <name evidence="1" type="primary">thiG</name>
    <name type="ordered locus">Noc_1633</name>
</gene>
<comment type="function">
    <text evidence="1">Catalyzes the rearrangement of 1-deoxy-D-xylulose 5-phosphate (DXP) to produce the thiazole phosphate moiety of thiamine. Sulfur is provided by the thiocarboxylate moiety of the carrier protein ThiS. In vitro, sulfur can be provided by H(2)S.</text>
</comment>
<comment type="catalytic activity">
    <reaction evidence="1">
        <text>[ThiS sulfur-carrier protein]-C-terminal-Gly-aminoethanethioate + 2-iminoacetate + 1-deoxy-D-xylulose 5-phosphate = [ThiS sulfur-carrier protein]-C-terminal Gly-Gly + 2-[(2R,5Z)-2-carboxy-4-methylthiazol-5(2H)-ylidene]ethyl phosphate + 2 H2O + H(+)</text>
        <dbReference type="Rhea" id="RHEA:26297"/>
        <dbReference type="Rhea" id="RHEA-COMP:12909"/>
        <dbReference type="Rhea" id="RHEA-COMP:19908"/>
        <dbReference type="ChEBI" id="CHEBI:15377"/>
        <dbReference type="ChEBI" id="CHEBI:15378"/>
        <dbReference type="ChEBI" id="CHEBI:57792"/>
        <dbReference type="ChEBI" id="CHEBI:62899"/>
        <dbReference type="ChEBI" id="CHEBI:77846"/>
        <dbReference type="ChEBI" id="CHEBI:90778"/>
        <dbReference type="ChEBI" id="CHEBI:232372"/>
        <dbReference type="EC" id="2.8.1.10"/>
    </reaction>
</comment>
<comment type="pathway">
    <text evidence="1">Cofactor biosynthesis; thiamine diphosphate biosynthesis.</text>
</comment>
<comment type="subunit">
    <text evidence="1">Homotetramer. Forms heterodimers with either ThiH or ThiS.</text>
</comment>
<comment type="subcellular location">
    <subcellularLocation>
        <location evidence="1">Cytoplasm</location>
    </subcellularLocation>
</comment>
<comment type="similarity">
    <text evidence="1">Belongs to the ThiG family.</text>
</comment>
<comment type="sequence caution" evidence="2">
    <conflict type="erroneous initiation">
        <sequence resource="EMBL-CDS" id="ABA58105"/>
    </conflict>
</comment>
<keyword id="KW-0963">Cytoplasm</keyword>
<keyword id="KW-1185">Reference proteome</keyword>
<keyword id="KW-0704">Schiff base</keyword>
<keyword id="KW-0784">Thiamine biosynthesis</keyword>
<keyword id="KW-0808">Transferase</keyword>
<reference key="1">
    <citation type="journal article" date="2006" name="Appl. Environ. Microbiol.">
        <title>Complete genome sequence of the marine, chemolithoautotrophic, ammonia-oxidizing bacterium Nitrosococcus oceani ATCC 19707.</title>
        <authorList>
            <person name="Klotz M.G."/>
            <person name="Arp D.J."/>
            <person name="Chain P.S.G."/>
            <person name="El-Sheikh A.F."/>
            <person name="Hauser L.J."/>
            <person name="Hommes N.G."/>
            <person name="Larimer F.W."/>
            <person name="Malfatti S.A."/>
            <person name="Norton J.M."/>
            <person name="Poret-Peterson A.T."/>
            <person name="Vergez L.M."/>
            <person name="Ward B.B."/>
        </authorList>
    </citation>
    <scope>NUCLEOTIDE SEQUENCE [LARGE SCALE GENOMIC DNA]</scope>
    <source>
        <strain>ATCC 19707 / BCRC 17464 / JCM 30415 / NCIMB 11848 / C-107</strain>
    </source>
</reference>
<organism>
    <name type="scientific">Nitrosococcus oceani (strain ATCC 19707 / BCRC 17464 / JCM 30415 / NCIMB 11848 / C-107)</name>
    <dbReference type="NCBI Taxonomy" id="323261"/>
    <lineage>
        <taxon>Bacteria</taxon>
        <taxon>Pseudomonadati</taxon>
        <taxon>Pseudomonadota</taxon>
        <taxon>Gammaproteobacteria</taxon>
        <taxon>Chromatiales</taxon>
        <taxon>Chromatiaceae</taxon>
        <taxon>Nitrosococcus</taxon>
    </lineage>
</organism>
<evidence type="ECO:0000255" key="1">
    <source>
        <dbReference type="HAMAP-Rule" id="MF_00443"/>
    </source>
</evidence>
<evidence type="ECO:0000305" key="2"/>
<proteinExistence type="inferred from homology"/>
<dbReference type="EC" id="2.8.1.10" evidence="1"/>
<dbReference type="EMBL" id="CP000127">
    <property type="protein sequence ID" value="ABA58105.1"/>
    <property type="status" value="ALT_INIT"/>
    <property type="molecule type" value="Genomic_DNA"/>
</dbReference>
<dbReference type="SMR" id="Q3JAP1"/>
<dbReference type="FunCoup" id="Q3JAP1">
    <property type="interactions" value="352"/>
</dbReference>
<dbReference type="STRING" id="323261.Noc_1633"/>
<dbReference type="KEGG" id="noc:Noc_1633"/>
<dbReference type="eggNOG" id="COG2022">
    <property type="taxonomic scope" value="Bacteria"/>
</dbReference>
<dbReference type="eggNOG" id="COG2104">
    <property type="taxonomic scope" value="Bacteria"/>
</dbReference>
<dbReference type="HOGENOM" id="CLU_062233_1_1_6"/>
<dbReference type="InParanoid" id="Q3JAP1"/>
<dbReference type="UniPathway" id="UPA00060"/>
<dbReference type="Proteomes" id="UP000006838">
    <property type="component" value="Chromosome"/>
</dbReference>
<dbReference type="GO" id="GO:0005737">
    <property type="term" value="C:cytoplasm"/>
    <property type="evidence" value="ECO:0007669"/>
    <property type="project" value="UniProtKB-SubCell"/>
</dbReference>
<dbReference type="GO" id="GO:1990107">
    <property type="term" value="F:thiazole synthase activity"/>
    <property type="evidence" value="ECO:0007669"/>
    <property type="project" value="UniProtKB-EC"/>
</dbReference>
<dbReference type="GO" id="GO:0009229">
    <property type="term" value="P:thiamine diphosphate biosynthetic process"/>
    <property type="evidence" value="ECO:0007669"/>
    <property type="project" value="UniProtKB-UniRule"/>
</dbReference>
<dbReference type="CDD" id="cd04728">
    <property type="entry name" value="ThiG"/>
    <property type="match status" value="1"/>
</dbReference>
<dbReference type="Gene3D" id="3.20.20.70">
    <property type="entry name" value="Aldolase class I"/>
    <property type="match status" value="1"/>
</dbReference>
<dbReference type="HAMAP" id="MF_00443">
    <property type="entry name" value="ThiG"/>
    <property type="match status" value="1"/>
</dbReference>
<dbReference type="InterPro" id="IPR013785">
    <property type="entry name" value="Aldolase_TIM"/>
</dbReference>
<dbReference type="InterPro" id="IPR033983">
    <property type="entry name" value="Thiazole_synthase_ThiG"/>
</dbReference>
<dbReference type="InterPro" id="IPR008867">
    <property type="entry name" value="ThiG"/>
</dbReference>
<dbReference type="PANTHER" id="PTHR34266">
    <property type="entry name" value="THIAZOLE SYNTHASE"/>
    <property type="match status" value="1"/>
</dbReference>
<dbReference type="PANTHER" id="PTHR34266:SF2">
    <property type="entry name" value="THIAZOLE SYNTHASE"/>
    <property type="match status" value="1"/>
</dbReference>
<dbReference type="Pfam" id="PF05690">
    <property type="entry name" value="ThiG"/>
    <property type="match status" value="1"/>
</dbReference>
<dbReference type="SUPFAM" id="SSF110399">
    <property type="entry name" value="ThiG-like"/>
    <property type="match status" value="1"/>
</dbReference>
<protein>
    <recommendedName>
        <fullName evidence="1">Thiazole synthase</fullName>
        <ecNumber evidence="1">2.8.1.10</ecNumber>
    </recommendedName>
</protein>
<feature type="chain" id="PRO_0000236347" description="Thiazole synthase">
    <location>
        <begin position="1"/>
        <end position="262"/>
    </location>
</feature>
<feature type="active site" description="Schiff-base intermediate with DXP" evidence="1">
    <location>
        <position position="104"/>
    </location>
</feature>
<feature type="binding site" evidence="1">
    <location>
        <position position="165"/>
    </location>
    <ligand>
        <name>1-deoxy-D-xylulose 5-phosphate</name>
        <dbReference type="ChEBI" id="CHEBI:57792"/>
    </ligand>
</feature>
<feature type="binding site" evidence="1">
    <location>
        <begin position="191"/>
        <end position="192"/>
    </location>
    <ligand>
        <name>1-deoxy-D-xylulose 5-phosphate</name>
        <dbReference type="ChEBI" id="CHEBI:57792"/>
    </ligand>
</feature>
<feature type="binding site" evidence="1">
    <location>
        <begin position="213"/>
        <end position="214"/>
    </location>
    <ligand>
        <name>1-deoxy-D-xylulose 5-phosphate</name>
        <dbReference type="ChEBI" id="CHEBI:57792"/>
    </ligand>
</feature>
<name>THIG_NITOC</name>